<organism>
    <name type="scientific">Agrobacterium fabrum (strain C58 / ATCC 33970)</name>
    <name type="common">Agrobacterium tumefaciens (strain C58)</name>
    <dbReference type="NCBI Taxonomy" id="176299"/>
    <lineage>
        <taxon>Bacteria</taxon>
        <taxon>Pseudomonadati</taxon>
        <taxon>Pseudomonadota</taxon>
        <taxon>Alphaproteobacteria</taxon>
        <taxon>Hyphomicrobiales</taxon>
        <taxon>Rhizobiaceae</taxon>
        <taxon>Rhizobium/Agrobacterium group</taxon>
        <taxon>Agrobacterium</taxon>
        <taxon>Agrobacterium tumefaciens complex</taxon>
    </lineage>
</organism>
<protein>
    <recommendedName>
        <fullName evidence="2">GTP cyclohydrolase 1</fullName>
        <ecNumber evidence="2">3.5.4.16</ecNumber>
    </recommendedName>
    <alternativeName>
        <fullName evidence="2">GTP cyclohydrolase I</fullName>
        <shortName evidence="2">GTP-CH-I</shortName>
    </alternativeName>
</protein>
<comment type="catalytic activity">
    <reaction evidence="2">
        <text>GTP + H2O = 7,8-dihydroneopterin 3'-triphosphate + formate + H(+)</text>
        <dbReference type="Rhea" id="RHEA:17473"/>
        <dbReference type="ChEBI" id="CHEBI:15377"/>
        <dbReference type="ChEBI" id="CHEBI:15378"/>
        <dbReference type="ChEBI" id="CHEBI:15740"/>
        <dbReference type="ChEBI" id="CHEBI:37565"/>
        <dbReference type="ChEBI" id="CHEBI:58462"/>
        <dbReference type="EC" id="3.5.4.16"/>
    </reaction>
</comment>
<comment type="pathway">
    <text evidence="2">Cofactor biosynthesis; 7,8-dihydroneopterin triphosphate biosynthesis; 7,8-dihydroneopterin triphosphate from GTP: step 1/1.</text>
</comment>
<comment type="subunit">
    <text evidence="1">Toroid-shaped homodecamer, composed of two pentamers of five dimers.</text>
</comment>
<comment type="similarity">
    <text evidence="2">Belongs to the GTP cyclohydrolase I family.</text>
</comment>
<sequence length="208" mass="23031">MDAIVKNFPGAGAKPDVAEARPSQAEAEEAVRVLLRWAGENPAREGLLDTPKRVAKAYRELFAGYELNVQDVLGTTFEEVGGYDDVVLVRDIPFFSHCEHHMVPIVGKAHVAYLPAGRVLGLSKIARVVEIFGRRLQTQENMTAQIARSIEETLKPRGVAVMIDAEHMCMSMRGVNKQGSTTLTTSFTGTFKNDPAEQVRFMTMVRNR</sequence>
<proteinExistence type="inferred from homology"/>
<feature type="chain" id="PRO_0000119378" description="GTP cyclohydrolase 1">
    <location>
        <begin position="1"/>
        <end position="208"/>
    </location>
</feature>
<feature type="binding site" evidence="2">
    <location>
        <position position="98"/>
    </location>
    <ligand>
        <name>Zn(2+)</name>
        <dbReference type="ChEBI" id="CHEBI:29105"/>
    </ligand>
</feature>
<feature type="binding site" evidence="2">
    <location>
        <position position="101"/>
    </location>
    <ligand>
        <name>Zn(2+)</name>
        <dbReference type="ChEBI" id="CHEBI:29105"/>
    </ligand>
</feature>
<feature type="binding site" evidence="2">
    <location>
        <position position="169"/>
    </location>
    <ligand>
        <name>Zn(2+)</name>
        <dbReference type="ChEBI" id="CHEBI:29105"/>
    </ligand>
</feature>
<gene>
    <name evidence="2" type="primary">folE</name>
    <name type="ordered locus">Atu1749</name>
    <name type="ORF">AGR_C_3211</name>
</gene>
<reference key="1">
    <citation type="journal article" date="2001" name="Science">
        <title>The genome of the natural genetic engineer Agrobacterium tumefaciens C58.</title>
        <authorList>
            <person name="Wood D.W."/>
            <person name="Setubal J.C."/>
            <person name="Kaul R."/>
            <person name="Monks D.E."/>
            <person name="Kitajima J.P."/>
            <person name="Okura V.K."/>
            <person name="Zhou Y."/>
            <person name="Chen L."/>
            <person name="Wood G.E."/>
            <person name="Almeida N.F. Jr."/>
            <person name="Woo L."/>
            <person name="Chen Y."/>
            <person name="Paulsen I.T."/>
            <person name="Eisen J.A."/>
            <person name="Karp P.D."/>
            <person name="Bovee D. Sr."/>
            <person name="Chapman P."/>
            <person name="Clendenning J."/>
            <person name="Deatherage G."/>
            <person name="Gillet W."/>
            <person name="Grant C."/>
            <person name="Kutyavin T."/>
            <person name="Levy R."/>
            <person name="Li M.-J."/>
            <person name="McClelland E."/>
            <person name="Palmieri A."/>
            <person name="Raymond C."/>
            <person name="Rouse G."/>
            <person name="Saenphimmachak C."/>
            <person name="Wu Z."/>
            <person name="Romero P."/>
            <person name="Gordon D."/>
            <person name="Zhang S."/>
            <person name="Yoo H."/>
            <person name="Tao Y."/>
            <person name="Biddle P."/>
            <person name="Jung M."/>
            <person name="Krespan W."/>
            <person name="Perry M."/>
            <person name="Gordon-Kamm B."/>
            <person name="Liao L."/>
            <person name="Kim S."/>
            <person name="Hendrick C."/>
            <person name="Zhao Z.-Y."/>
            <person name="Dolan M."/>
            <person name="Chumley F."/>
            <person name="Tingey S.V."/>
            <person name="Tomb J.-F."/>
            <person name="Gordon M.P."/>
            <person name="Olson M.V."/>
            <person name="Nester E.W."/>
        </authorList>
    </citation>
    <scope>NUCLEOTIDE SEQUENCE [LARGE SCALE GENOMIC DNA]</scope>
    <source>
        <strain>C58 / ATCC 33970</strain>
    </source>
</reference>
<reference key="2">
    <citation type="journal article" date="2001" name="Science">
        <title>Genome sequence of the plant pathogen and biotechnology agent Agrobacterium tumefaciens C58.</title>
        <authorList>
            <person name="Goodner B."/>
            <person name="Hinkle G."/>
            <person name="Gattung S."/>
            <person name="Miller N."/>
            <person name="Blanchard M."/>
            <person name="Qurollo B."/>
            <person name="Goldman B.S."/>
            <person name="Cao Y."/>
            <person name="Askenazi M."/>
            <person name="Halling C."/>
            <person name="Mullin L."/>
            <person name="Houmiel K."/>
            <person name="Gordon J."/>
            <person name="Vaudin M."/>
            <person name="Iartchouk O."/>
            <person name="Epp A."/>
            <person name="Liu F."/>
            <person name="Wollam C."/>
            <person name="Allinger M."/>
            <person name="Doughty D."/>
            <person name="Scott C."/>
            <person name="Lappas C."/>
            <person name="Markelz B."/>
            <person name="Flanagan C."/>
            <person name="Crowell C."/>
            <person name="Gurson J."/>
            <person name="Lomo C."/>
            <person name="Sear C."/>
            <person name="Strub G."/>
            <person name="Cielo C."/>
            <person name="Slater S."/>
        </authorList>
    </citation>
    <scope>NUCLEOTIDE SEQUENCE [LARGE SCALE GENOMIC DNA]</scope>
    <source>
        <strain>C58 / ATCC 33970</strain>
    </source>
</reference>
<dbReference type="EC" id="3.5.4.16" evidence="2"/>
<dbReference type="EMBL" id="AE007869">
    <property type="protein sequence ID" value="AAK87519.1"/>
    <property type="molecule type" value="Genomic_DNA"/>
</dbReference>
<dbReference type="PIR" id="AF2791">
    <property type="entry name" value="AF2791"/>
</dbReference>
<dbReference type="PIR" id="F97570">
    <property type="entry name" value="F97570"/>
</dbReference>
<dbReference type="RefSeq" id="NP_354734.1">
    <property type="nucleotide sequence ID" value="NC_003062.2"/>
</dbReference>
<dbReference type="RefSeq" id="WP_003495569.1">
    <property type="nucleotide sequence ID" value="NC_003062.2"/>
</dbReference>
<dbReference type="SMR" id="Q8UEK8"/>
<dbReference type="STRING" id="176299.Atu1749"/>
<dbReference type="EnsemblBacteria" id="AAK87519">
    <property type="protein sequence ID" value="AAK87519"/>
    <property type="gene ID" value="Atu1749"/>
</dbReference>
<dbReference type="GeneID" id="97364511"/>
<dbReference type="KEGG" id="atu:Atu1749"/>
<dbReference type="PATRIC" id="fig|176299.10.peg.1762"/>
<dbReference type="eggNOG" id="COG0302">
    <property type="taxonomic scope" value="Bacteria"/>
</dbReference>
<dbReference type="HOGENOM" id="CLU_049768_3_1_5"/>
<dbReference type="OrthoDB" id="9801207at2"/>
<dbReference type="PhylomeDB" id="Q8UEK8"/>
<dbReference type="BioCyc" id="AGRO:ATU1749-MONOMER"/>
<dbReference type="UniPathway" id="UPA00848">
    <property type="reaction ID" value="UER00151"/>
</dbReference>
<dbReference type="PRO" id="PR:Q8UEK8"/>
<dbReference type="Proteomes" id="UP000000813">
    <property type="component" value="Chromosome circular"/>
</dbReference>
<dbReference type="GO" id="GO:0005737">
    <property type="term" value="C:cytoplasm"/>
    <property type="evidence" value="ECO:0007669"/>
    <property type="project" value="TreeGrafter"/>
</dbReference>
<dbReference type="GO" id="GO:0005525">
    <property type="term" value="F:GTP binding"/>
    <property type="evidence" value="ECO:0007669"/>
    <property type="project" value="UniProtKB-KW"/>
</dbReference>
<dbReference type="GO" id="GO:0003934">
    <property type="term" value="F:GTP cyclohydrolase I activity"/>
    <property type="evidence" value="ECO:0007669"/>
    <property type="project" value="UniProtKB-UniRule"/>
</dbReference>
<dbReference type="GO" id="GO:0008270">
    <property type="term" value="F:zinc ion binding"/>
    <property type="evidence" value="ECO:0007669"/>
    <property type="project" value="UniProtKB-UniRule"/>
</dbReference>
<dbReference type="GO" id="GO:0006730">
    <property type="term" value="P:one-carbon metabolic process"/>
    <property type="evidence" value="ECO:0007669"/>
    <property type="project" value="UniProtKB-UniRule"/>
</dbReference>
<dbReference type="GO" id="GO:0006729">
    <property type="term" value="P:tetrahydrobiopterin biosynthetic process"/>
    <property type="evidence" value="ECO:0007669"/>
    <property type="project" value="TreeGrafter"/>
</dbReference>
<dbReference type="GO" id="GO:0046654">
    <property type="term" value="P:tetrahydrofolate biosynthetic process"/>
    <property type="evidence" value="ECO:0007669"/>
    <property type="project" value="UniProtKB-UniRule"/>
</dbReference>
<dbReference type="FunFam" id="1.10.286.10:FF:000001">
    <property type="entry name" value="GTP cyclohydrolase 1"/>
    <property type="match status" value="1"/>
</dbReference>
<dbReference type="FunFam" id="3.30.1130.10:FF:000001">
    <property type="entry name" value="GTP cyclohydrolase 1"/>
    <property type="match status" value="1"/>
</dbReference>
<dbReference type="Gene3D" id="1.10.286.10">
    <property type="match status" value="1"/>
</dbReference>
<dbReference type="Gene3D" id="3.30.1130.10">
    <property type="match status" value="1"/>
</dbReference>
<dbReference type="HAMAP" id="MF_00223">
    <property type="entry name" value="FolE"/>
    <property type="match status" value="1"/>
</dbReference>
<dbReference type="InterPro" id="IPR043133">
    <property type="entry name" value="GTP-CH-I_C/QueF"/>
</dbReference>
<dbReference type="InterPro" id="IPR043134">
    <property type="entry name" value="GTP-CH-I_N"/>
</dbReference>
<dbReference type="InterPro" id="IPR001474">
    <property type="entry name" value="GTP_CycHdrlase_I"/>
</dbReference>
<dbReference type="InterPro" id="IPR018234">
    <property type="entry name" value="GTP_CycHdrlase_I_CS"/>
</dbReference>
<dbReference type="InterPro" id="IPR020602">
    <property type="entry name" value="GTP_CycHdrlase_I_dom"/>
</dbReference>
<dbReference type="NCBIfam" id="TIGR00063">
    <property type="entry name" value="folE"/>
    <property type="match status" value="1"/>
</dbReference>
<dbReference type="NCBIfam" id="NF006825">
    <property type="entry name" value="PRK09347.1-2"/>
    <property type="match status" value="1"/>
</dbReference>
<dbReference type="NCBIfam" id="NF006826">
    <property type="entry name" value="PRK09347.1-3"/>
    <property type="match status" value="1"/>
</dbReference>
<dbReference type="PANTHER" id="PTHR11109:SF7">
    <property type="entry name" value="GTP CYCLOHYDROLASE 1"/>
    <property type="match status" value="1"/>
</dbReference>
<dbReference type="PANTHER" id="PTHR11109">
    <property type="entry name" value="GTP CYCLOHYDROLASE I"/>
    <property type="match status" value="1"/>
</dbReference>
<dbReference type="Pfam" id="PF01227">
    <property type="entry name" value="GTP_cyclohydroI"/>
    <property type="match status" value="1"/>
</dbReference>
<dbReference type="SUPFAM" id="SSF55620">
    <property type="entry name" value="Tetrahydrobiopterin biosynthesis enzymes-like"/>
    <property type="match status" value="1"/>
</dbReference>
<dbReference type="PROSITE" id="PS00859">
    <property type="entry name" value="GTP_CYCLOHYDROL_1_1"/>
    <property type="match status" value="1"/>
</dbReference>
<evidence type="ECO:0000250" key="1"/>
<evidence type="ECO:0000255" key="2">
    <source>
        <dbReference type="HAMAP-Rule" id="MF_00223"/>
    </source>
</evidence>
<accession>Q8UEK8</accession>
<keyword id="KW-0342">GTP-binding</keyword>
<keyword id="KW-0378">Hydrolase</keyword>
<keyword id="KW-0479">Metal-binding</keyword>
<keyword id="KW-0547">Nucleotide-binding</keyword>
<keyword id="KW-0554">One-carbon metabolism</keyword>
<keyword id="KW-1185">Reference proteome</keyword>
<keyword id="KW-0862">Zinc</keyword>
<name>GCH1_AGRFC</name>